<proteinExistence type="inferred from homology"/>
<name>TSAD_PROMH</name>
<reference key="1">
    <citation type="journal article" date="2008" name="J. Bacteriol.">
        <title>Complete genome sequence of uropathogenic Proteus mirabilis, a master of both adherence and motility.</title>
        <authorList>
            <person name="Pearson M.M."/>
            <person name="Sebaihia M."/>
            <person name="Churcher C."/>
            <person name="Quail M.A."/>
            <person name="Seshasayee A.S."/>
            <person name="Luscombe N.M."/>
            <person name="Abdellah Z."/>
            <person name="Arrosmith C."/>
            <person name="Atkin B."/>
            <person name="Chillingworth T."/>
            <person name="Hauser H."/>
            <person name="Jagels K."/>
            <person name="Moule S."/>
            <person name="Mungall K."/>
            <person name="Norbertczak H."/>
            <person name="Rabbinowitsch E."/>
            <person name="Walker D."/>
            <person name="Whithead S."/>
            <person name="Thomson N.R."/>
            <person name="Rather P.N."/>
            <person name="Parkhill J."/>
            <person name="Mobley H.L.T."/>
        </authorList>
    </citation>
    <scope>NUCLEOTIDE SEQUENCE [LARGE SCALE GENOMIC DNA]</scope>
    <source>
        <strain>HI4320</strain>
    </source>
</reference>
<feature type="chain" id="PRO_1000192693" description="tRNA N6-adenosine threonylcarbamoyltransferase">
    <location>
        <begin position="1"/>
        <end position="340"/>
    </location>
</feature>
<feature type="binding site" evidence="1">
    <location>
        <position position="111"/>
    </location>
    <ligand>
        <name>Fe cation</name>
        <dbReference type="ChEBI" id="CHEBI:24875"/>
    </ligand>
</feature>
<feature type="binding site" evidence="1">
    <location>
        <position position="115"/>
    </location>
    <ligand>
        <name>Fe cation</name>
        <dbReference type="ChEBI" id="CHEBI:24875"/>
    </ligand>
</feature>
<feature type="binding site" evidence="1">
    <location>
        <begin position="134"/>
        <end position="138"/>
    </location>
    <ligand>
        <name>substrate</name>
    </ligand>
</feature>
<feature type="binding site" evidence="1">
    <location>
        <position position="167"/>
    </location>
    <ligand>
        <name>substrate</name>
    </ligand>
</feature>
<feature type="binding site" evidence="1">
    <location>
        <position position="180"/>
    </location>
    <ligand>
        <name>substrate</name>
    </ligand>
</feature>
<feature type="binding site" evidence="1">
    <location>
        <position position="272"/>
    </location>
    <ligand>
        <name>substrate</name>
    </ligand>
</feature>
<feature type="binding site" evidence="1">
    <location>
        <position position="300"/>
    </location>
    <ligand>
        <name>Fe cation</name>
        <dbReference type="ChEBI" id="CHEBI:24875"/>
    </ligand>
</feature>
<organism>
    <name type="scientific">Proteus mirabilis (strain HI4320)</name>
    <dbReference type="NCBI Taxonomy" id="529507"/>
    <lineage>
        <taxon>Bacteria</taxon>
        <taxon>Pseudomonadati</taxon>
        <taxon>Pseudomonadota</taxon>
        <taxon>Gammaproteobacteria</taxon>
        <taxon>Enterobacterales</taxon>
        <taxon>Morganellaceae</taxon>
        <taxon>Proteus</taxon>
    </lineage>
</organism>
<evidence type="ECO:0000255" key="1">
    <source>
        <dbReference type="HAMAP-Rule" id="MF_01445"/>
    </source>
</evidence>
<protein>
    <recommendedName>
        <fullName evidence="1">tRNA N6-adenosine threonylcarbamoyltransferase</fullName>
        <ecNumber evidence="1">2.3.1.234</ecNumber>
    </recommendedName>
    <alternativeName>
        <fullName evidence="1">N6-L-threonylcarbamoyladenine synthase</fullName>
        <shortName evidence="1">t(6)A synthase</shortName>
    </alternativeName>
    <alternativeName>
        <fullName evidence="1">t(6)A37 threonylcarbamoyladenosine biosynthesis protein TsaD</fullName>
    </alternativeName>
    <alternativeName>
        <fullName evidence="1">tRNA threonylcarbamoyladenosine biosynthesis protein TsaD</fullName>
    </alternativeName>
</protein>
<sequence length="340" mass="36350">MRVLGIETSCDETGIAIYDDKAGLLANQLYSQIKLHADYGGVVPELASRDHIRKTVPLIQAALKEANLTAKDIDAVAYTAGPGLVGALLVGATIGRSLAFAWDVPAIPVHHMEGHLLAPMLEEKTPDFPFVALLVSGGHTQLISVTGIGEYTLLGESIDDAAGEAFDKTAKLLGLDYPGGPVLSKMAQQGVEGRFVFPRPMTDRPGLDFSFSGLKTFAANTIRQNDDSEQTRADIARAFEDAVVDTLAIKCRRALEQTGFKRLVMAGGVSANRTLRAKMAMIMEQLGGEVFYARPELCTDNGAMIALAGMIRFKGGTEGPLGVTVRPRWPLAELPALADK</sequence>
<accession>B4EW57</accession>
<dbReference type="EC" id="2.3.1.234" evidence="1"/>
<dbReference type="EMBL" id="AM942759">
    <property type="protein sequence ID" value="CAR44677.1"/>
    <property type="molecule type" value="Genomic_DNA"/>
</dbReference>
<dbReference type="RefSeq" id="WP_004245584.1">
    <property type="nucleotide sequence ID" value="NC_010554.1"/>
</dbReference>
<dbReference type="SMR" id="B4EW57"/>
<dbReference type="DNASU" id="6803087"/>
<dbReference type="EnsemblBacteria" id="CAR44677">
    <property type="protein sequence ID" value="CAR44677"/>
    <property type="gene ID" value="PMI2369"/>
</dbReference>
<dbReference type="GeneID" id="6803087"/>
<dbReference type="KEGG" id="pmr:PMI2369"/>
<dbReference type="eggNOG" id="COG0533">
    <property type="taxonomic scope" value="Bacteria"/>
</dbReference>
<dbReference type="HOGENOM" id="CLU_023208_0_2_6"/>
<dbReference type="Proteomes" id="UP000008319">
    <property type="component" value="Chromosome"/>
</dbReference>
<dbReference type="GO" id="GO:0005737">
    <property type="term" value="C:cytoplasm"/>
    <property type="evidence" value="ECO:0007669"/>
    <property type="project" value="UniProtKB-SubCell"/>
</dbReference>
<dbReference type="GO" id="GO:0005506">
    <property type="term" value="F:iron ion binding"/>
    <property type="evidence" value="ECO:0007669"/>
    <property type="project" value="UniProtKB-UniRule"/>
</dbReference>
<dbReference type="GO" id="GO:0061711">
    <property type="term" value="F:N(6)-L-threonylcarbamoyladenine synthase activity"/>
    <property type="evidence" value="ECO:0007669"/>
    <property type="project" value="UniProtKB-EC"/>
</dbReference>
<dbReference type="GO" id="GO:0002949">
    <property type="term" value="P:tRNA threonylcarbamoyladenosine modification"/>
    <property type="evidence" value="ECO:0007669"/>
    <property type="project" value="UniProtKB-UniRule"/>
</dbReference>
<dbReference type="CDD" id="cd24133">
    <property type="entry name" value="ASKHA_NBD_TsaD_bac"/>
    <property type="match status" value="1"/>
</dbReference>
<dbReference type="FunFam" id="3.30.420.40:FF:000031">
    <property type="entry name" value="tRNA N6-adenosine threonylcarbamoyltransferase"/>
    <property type="match status" value="1"/>
</dbReference>
<dbReference type="Gene3D" id="3.30.420.40">
    <property type="match status" value="2"/>
</dbReference>
<dbReference type="HAMAP" id="MF_01445">
    <property type="entry name" value="TsaD"/>
    <property type="match status" value="1"/>
</dbReference>
<dbReference type="InterPro" id="IPR043129">
    <property type="entry name" value="ATPase_NBD"/>
</dbReference>
<dbReference type="InterPro" id="IPR000905">
    <property type="entry name" value="Gcp-like_dom"/>
</dbReference>
<dbReference type="InterPro" id="IPR017861">
    <property type="entry name" value="KAE1/TsaD"/>
</dbReference>
<dbReference type="InterPro" id="IPR017860">
    <property type="entry name" value="Peptidase_M22_CS"/>
</dbReference>
<dbReference type="InterPro" id="IPR022450">
    <property type="entry name" value="TsaD"/>
</dbReference>
<dbReference type="NCBIfam" id="TIGR00329">
    <property type="entry name" value="gcp_kae1"/>
    <property type="match status" value="1"/>
</dbReference>
<dbReference type="NCBIfam" id="TIGR03723">
    <property type="entry name" value="T6A_TsaD_YgjD"/>
    <property type="match status" value="1"/>
</dbReference>
<dbReference type="PANTHER" id="PTHR11735">
    <property type="entry name" value="TRNA N6-ADENOSINE THREONYLCARBAMOYLTRANSFERASE"/>
    <property type="match status" value="1"/>
</dbReference>
<dbReference type="PANTHER" id="PTHR11735:SF6">
    <property type="entry name" value="TRNA N6-ADENOSINE THREONYLCARBAMOYLTRANSFERASE, MITOCHONDRIAL"/>
    <property type="match status" value="1"/>
</dbReference>
<dbReference type="Pfam" id="PF00814">
    <property type="entry name" value="TsaD"/>
    <property type="match status" value="1"/>
</dbReference>
<dbReference type="PRINTS" id="PR00789">
    <property type="entry name" value="OSIALOPTASE"/>
</dbReference>
<dbReference type="SUPFAM" id="SSF53067">
    <property type="entry name" value="Actin-like ATPase domain"/>
    <property type="match status" value="1"/>
</dbReference>
<dbReference type="PROSITE" id="PS01016">
    <property type="entry name" value="GLYCOPROTEASE"/>
    <property type="match status" value="1"/>
</dbReference>
<gene>
    <name evidence="1" type="primary">tsaD</name>
    <name type="synonym">gcp</name>
    <name type="ordered locus">PMI2369</name>
</gene>
<comment type="function">
    <text evidence="1">Required for the formation of a threonylcarbamoyl group on adenosine at position 37 (t(6)A37) in tRNAs that read codons beginning with adenine. Is involved in the transfer of the threonylcarbamoyl moiety of threonylcarbamoyl-AMP (TC-AMP) to the N6 group of A37, together with TsaE and TsaB. TsaD likely plays a direct catalytic role in this reaction.</text>
</comment>
<comment type="catalytic activity">
    <reaction evidence="1">
        <text>L-threonylcarbamoyladenylate + adenosine(37) in tRNA = N(6)-L-threonylcarbamoyladenosine(37) in tRNA + AMP + H(+)</text>
        <dbReference type="Rhea" id="RHEA:37059"/>
        <dbReference type="Rhea" id="RHEA-COMP:10162"/>
        <dbReference type="Rhea" id="RHEA-COMP:10163"/>
        <dbReference type="ChEBI" id="CHEBI:15378"/>
        <dbReference type="ChEBI" id="CHEBI:73682"/>
        <dbReference type="ChEBI" id="CHEBI:74411"/>
        <dbReference type="ChEBI" id="CHEBI:74418"/>
        <dbReference type="ChEBI" id="CHEBI:456215"/>
        <dbReference type="EC" id="2.3.1.234"/>
    </reaction>
</comment>
<comment type="cofactor">
    <cofactor evidence="1">
        <name>Fe(2+)</name>
        <dbReference type="ChEBI" id="CHEBI:29033"/>
    </cofactor>
    <text evidence="1">Binds 1 Fe(2+) ion per subunit.</text>
</comment>
<comment type="subcellular location">
    <subcellularLocation>
        <location evidence="1">Cytoplasm</location>
    </subcellularLocation>
</comment>
<comment type="similarity">
    <text evidence="1">Belongs to the KAE1 / TsaD family.</text>
</comment>
<keyword id="KW-0012">Acyltransferase</keyword>
<keyword id="KW-0963">Cytoplasm</keyword>
<keyword id="KW-0408">Iron</keyword>
<keyword id="KW-0479">Metal-binding</keyword>
<keyword id="KW-1185">Reference proteome</keyword>
<keyword id="KW-0808">Transferase</keyword>
<keyword id="KW-0819">tRNA processing</keyword>